<dbReference type="EC" id="2.7.7.6" evidence="1"/>
<dbReference type="EMBL" id="CP000117">
    <property type="protein sequence ID" value="ABA23808.1"/>
    <property type="molecule type" value="Genomic_DNA"/>
</dbReference>
<dbReference type="SMR" id="Q3M5C8"/>
<dbReference type="STRING" id="240292.Ava_4209"/>
<dbReference type="KEGG" id="ava:Ava_4209"/>
<dbReference type="eggNOG" id="COG0086">
    <property type="taxonomic scope" value="Bacteria"/>
</dbReference>
<dbReference type="HOGENOM" id="CLU_000524_1_0_3"/>
<dbReference type="Proteomes" id="UP000002533">
    <property type="component" value="Chromosome"/>
</dbReference>
<dbReference type="GO" id="GO:0000428">
    <property type="term" value="C:DNA-directed RNA polymerase complex"/>
    <property type="evidence" value="ECO:0007669"/>
    <property type="project" value="UniProtKB-KW"/>
</dbReference>
<dbReference type="GO" id="GO:0003677">
    <property type="term" value="F:DNA binding"/>
    <property type="evidence" value="ECO:0007669"/>
    <property type="project" value="UniProtKB-UniRule"/>
</dbReference>
<dbReference type="GO" id="GO:0003899">
    <property type="term" value="F:DNA-directed RNA polymerase activity"/>
    <property type="evidence" value="ECO:0007669"/>
    <property type="project" value="UniProtKB-UniRule"/>
</dbReference>
<dbReference type="GO" id="GO:0008270">
    <property type="term" value="F:zinc ion binding"/>
    <property type="evidence" value="ECO:0007669"/>
    <property type="project" value="UniProtKB-UniRule"/>
</dbReference>
<dbReference type="GO" id="GO:0006351">
    <property type="term" value="P:DNA-templated transcription"/>
    <property type="evidence" value="ECO:0007669"/>
    <property type="project" value="UniProtKB-UniRule"/>
</dbReference>
<dbReference type="CDD" id="cd02655">
    <property type="entry name" value="RNAP_beta'_C"/>
    <property type="match status" value="1"/>
</dbReference>
<dbReference type="FunFam" id="1.10.150.390:FF:000002">
    <property type="entry name" value="DNA-directed RNA polymerase subunit beta"/>
    <property type="match status" value="1"/>
</dbReference>
<dbReference type="Gene3D" id="1.10.132.30">
    <property type="match status" value="1"/>
</dbReference>
<dbReference type="Gene3D" id="1.10.150.390">
    <property type="match status" value="1"/>
</dbReference>
<dbReference type="Gene3D" id="1.10.1790.20">
    <property type="match status" value="1"/>
</dbReference>
<dbReference type="Gene3D" id="2.40.50.100">
    <property type="match status" value="2"/>
</dbReference>
<dbReference type="Gene3D" id="1.10.274.100">
    <property type="entry name" value="RNA polymerase Rpb1, domain 3"/>
    <property type="match status" value="1"/>
</dbReference>
<dbReference type="HAMAP" id="MF_01324">
    <property type="entry name" value="RNApol_bact_RpoC2"/>
    <property type="match status" value="1"/>
</dbReference>
<dbReference type="InterPro" id="IPR012756">
    <property type="entry name" value="DNA-dir_RpoC2_beta_pp"/>
</dbReference>
<dbReference type="InterPro" id="IPR045867">
    <property type="entry name" value="DNA-dir_RpoC_beta_prime"/>
</dbReference>
<dbReference type="InterPro" id="IPR007066">
    <property type="entry name" value="RNA_pol_Rpb1_3"/>
</dbReference>
<dbReference type="InterPro" id="IPR042102">
    <property type="entry name" value="RNA_pol_Rpb1_3_sf"/>
</dbReference>
<dbReference type="InterPro" id="IPR007083">
    <property type="entry name" value="RNA_pol_Rpb1_4"/>
</dbReference>
<dbReference type="InterPro" id="IPR007081">
    <property type="entry name" value="RNA_pol_Rpb1_5"/>
</dbReference>
<dbReference type="InterPro" id="IPR038120">
    <property type="entry name" value="Rpb1_funnel_sf"/>
</dbReference>
<dbReference type="NCBIfam" id="NF002724">
    <property type="entry name" value="PRK02597.1"/>
    <property type="match status" value="1"/>
</dbReference>
<dbReference type="NCBIfam" id="TIGR02388">
    <property type="entry name" value="rpoC2_cyan"/>
    <property type="match status" value="1"/>
</dbReference>
<dbReference type="PANTHER" id="PTHR19376">
    <property type="entry name" value="DNA-DIRECTED RNA POLYMERASE"/>
    <property type="match status" value="1"/>
</dbReference>
<dbReference type="PANTHER" id="PTHR19376:SF68">
    <property type="entry name" value="DNA-DIRECTED RNA POLYMERASE SUBUNIT BETA"/>
    <property type="match status" value="1"/>
</dbReference>
<dbReference type="Pfam" id="PF04983">
    <property type="entry name" value="RNA_pol_Rpb1_3"/>
    <property type="match status" value="1"/>
</dbReference>
<dbReference type="Pfam" id="PF05000">
    <property type="entry name" value="RNA_pol_Rpb1_4"/>
    <property type="match status" value="1"/>
</dbReference>
<dbReference type="Pfam" id="PF04998">
    <property type="entry name" value="RNA_pol_Rpb1_5"/>
    <property type="match status" value="2"/>
</dbReference>
<dbReference type="SUPFAM" id="SSF64484">
    <property type="entry name" value="beta and beta-prime subunits of DNA dependent RNA-polymerase"/>
    <property type="match status" value="1"/>
</dbReference>
<protein>
    <recommendedName>
        <fullName evidence="1">DNA-directed RNA polymerase subunit beta'</fullName>
        <shortName evidence="1">RNAP subunit beta'</shortName>
        <ecNumber evidence="1">2.7.7.6</ecNumber>
    </recommendedName>
    <alternativeName>
        <fullName evidence="1">RNA polymerase subunit beta'</fullName>
    </alternativeName>
    <alternativeName>
        <fullName evidence="1">Transcriptase subunit beta'</fullName>
    </alternativeName>
</protein>
<keyword id="KW-0240">DNA-directed RNA polymerase</keyword>
<keyword id="KW-0479">Metal-binding</keyword>
<keyword id="KW-0548">Nucleotidyltransferase</keyword>
<keyword id="KW-0804">Transcription</keyword>
<keyword id="KW-0808">Transferase</keyword>
<keyword id="KW-0862">Zinc</keyword>
<gene>
    <name evidence="1" type="primary">rpoC2</name>
    <name type="ordered locus">Ava_4209</name>
</gene>
<organism>
    <name type="scientific">Trichormus variabilis (strain ATCC 29413 / PCC 7937)</name>
    <name type="common">Anabaena variabilis</name>
    <dbReference type="NCBI Taxonomy" id="240292"/>
    <lineage>
        <taxon>Bacteria</taxon>
        <taxon>Bacillati</taxon>
        <taxon>Cyanobacteriota</taxon>
        <taxon>Cyanophyceae</taxon>
        <taxon>Nostocales</taxon>
        <taxon>Nostocaceae</taxon>
        <taxon>Trichormus</taxon>
    </lineage>
</organism>
<feature type="chain" id="PRO_0000353520" description="DNA-directed RNA polymerase subunit beta'">
    <location>
        <begin position="1"/>
        <end position="1355"/>
    </location>
</feature>
<feature type="region of interest" description="Disordered" evidence="2">
    <location>
        <begin position="1331"/>
        <end position="1355"/>
    </location>
</feature>
<feature type="binding site" evidence="1">
    <location>
        <position position="219"/>
    </location>
    <ligand>
        <name>Zn(2+)</name>
        <dbReference type="ChEBI" id="CHEBI:29105"/>
    </ligand>
</feature>
<feature type="binding site" evidence="1">
    <location>
        <position position="293"/>
    </location>
    <ligand>
        <name>Zn(2+)</name>
        <dbReference type="ChEBI" id="CHEBI:29105"/>
    </ligand>
</feature>
<feature type="binding site" evidence="1">
    <location>
        <position position="300"/>
    </location>
    <ligand>
        <name>Zn(2+)</name>
        <dbReference type="ChEBI" id="CHEBI:29105"/>
    </ligand>
</feature>
<feature type="binding site" evidence="1">
    <location>
        <position position="303"/>
    </location>
    <ligand>
        <name>Zn(2+)</name>
        <dbReference type="ChEBI" id="CHEBI:29105"/>
    </ligand>
</feature>
<proteinExistence type="inferred from homology"/>
<name>RPOC2_TRIV2</name>
<evidence type="ECO:0000255" key="1">
    <source>
        <dbReference type="HAMAP-Rule" id="MF_01324"/>
    </source>
</evidence>
<evidence type="ECO:0000256" key="2">
    <source>
        <dbReference type="SAM" id="MobiDB-lite"/>
    </source>
</evidence>
<reference key="1">
    <citation type="journal article" date="2014" name="Stand. Genomic Sci.">
        <title>Complete genome sequence of Anabaena variabilis ATCC 29413.</title>
        <authorList>
            <person name="Thiel T."/>
            <person name="Pratte B.S."/>
            <person name="Zhong J."/>
            <person name="Goodwin L."/>
            <person name="Copeland A."/>
            <person name="Lucas S."/>
            <person name="Han C."/>
            <person name="Pitluck S."/>
            <person name="Land M.L."/>
            <person name="Kyrpides N.C."/>
            <person name="Woyke T."/>
        </authorList>
    </citation>
    <scope>NUCLEOTIDE SEQUENCE [LARGE SCALE GENOMIC DNA]</scope>
    <source>
        <strain>ATCC 29413 / PCC 7937</strain>
    </source>
</reference>
<sequence length="1355" mass="147515">MTNEKMIFRNRVVDKGQLRNLISWAFTHYGTARTAVMADKLKDLGFRYATRAGVSISVDDLMVPPSKRSLLEAAEEEIRATEVRYQRGEITEVERFQKVIDTWNGTSEALKDEVVTHFKQTNPLNSVYMMAFSGARGNISQVRQLVGMRGLMADPQGEIIDLPIKTNFREGLTVTEYIISSYGARKGLVDTALRTADSGYLTRRLVDVSQDVIIREIDCGTTRGIPVRPMTEGSKTLIKLSTRLLGRVVGEDVIHPKTKEVIAARNTPISDDLAKEIEKAGVAEVVVRSPLTCEAARSVCQHCYGWSLAHAKMVDLGEAVGIIAAQSIGEPGTQLTMRTFHTGGVFTGEVAQQVRSKMDGTIKLPRKLRTRTHRTRHGEDALFVESNGIMILEPRKEGSETPAPQEIHVTQGSTIYIVDGQQVKQGQLLAEVALGGRTTRTNTEKAVKDVASDLAGEVKFAEVVPEQKTDRQGNTTTTAARGGLIWILSGEVYNLPPGAELVVKNGDRVETNGVLAETKLTTIHGGVVRLPEATPGKSTREIEIITASVVLDQATVTVQSSQGRNNYLITTGNNQVFNLRATPGTKVQNGQVVAELIDDRYRTTTGGFLKFAGVEVQKKGKAKLGYEVVQGGTLLWIPEETHEVNKDISLLLVEDGQFVEAGTEVVKDIFCQNSGVVEVTQKNDILREVVVKPGELLMVDDPEAVIGRDNTLLQPGEELLGQVATELRYIQYVESPEGPALLSRPVVEFAVPSNPDVPSTTSVSQQTGRSIQMRAVQRLPYKDSERVKSVEGVELLRTQLVLEIEQEGEQEHNASPLAADIELIPDPEDADVQRLQLVILESLVLRRDIAADATQGSTQTSLEVKDGDTIVPGSVVARTQILSKEGGIVRGVQKGSEAVRRCLVLRHSDMTTLNTSAKPKVKAGDLIVAGTELAPGVFAEESGQIVAVKNAGESTTTQDAALSTQNYAVTIRAGRPYRVSPGAVLQIEDGDLVQRGDNLVLLVFERAKTGDIIQGLPRIEELLEARKPKEACILAKRGGEVKVVYGDGDEAIAIKVIESNGVVTDYPLGPGQNLAMPDGSVVPAGQPLSDGPSNPHEILEVFFSLGSEDGVYACASHALQKVQTFLVNEVQMVYQSQGIDIADKHIEVIVRQMTNKVRIDDGGDTTMLPGELVELRQVEQVNEAMAITGGARAQYTPVLLGITKASLNTDSFISAASFQETTRVLTEAAIEGKSDWLRGLKENVIIGRLIPAGTGYNTYDEPGMLEDYSTLETTSVLDETDDPLDMVLDDRTARAYNLDSPGLAETGFSNRRSILDDDELIADEIHDLVEAEVEVDDEVDDDYEDDDEDDDDYED</sequence>
<accession>Q3M5C8</accession>
<comment type="function">
    <text evidence="1">DNA-dependent RNA polymerase catalyzes the transcription of DNA into RNA using the four ribonucleoside triphosphates as substrates.</text>
</comment>
<comment type="catalytic activity">
    <reaction evidence="1">
        <text>RNA(n) + a ribonucleoside 5'-triphosphate = RNA(n+1) + diphosphate</text>
        <dbReference type="Rhea" id="RHEA:21248"/>
        <dbReference type="Rhea" id="RHEA-COMP:14527"/>
        <dbReference type="Rhea" id="RHEA-COMP:17342"/>
        <dbReference type="ChEBI" id="CHEBI:33019"/>
        <dbReference type="ChEBI" id="CHEBI:61557"/>
        <dbReference type="ChEBI" id="CHEBI:140395"/>
        <dbReference type="EC" id="2.7.7.6"/>
    </reaction>
</comment>
<comment type="cofactor">
    <cofactor evidence="1">
        <name>Zn(2+)</name>
        <dbReference type="ChEBI" id="CHEBI:29105"/>
    </cofactor>
    <text evidence="1">Binds 1 Zn(2+) ion per subunit.</text>
</comment>
<comment type="subunit">
    <text evidence="1">In cyanobacteria the RNAP catalytic core is composed of 2 alpha, 1 beta, 1 beta', 1 gamma and 1 omega subunit. When a sigma factor is associated with the core the holoenzyme is formed, which can initiate transcription.</text>
</comment>
<comment type="similarity">
    <text evidence="1">Belongs to the RNA polymerase beta' chain family. RpoC2 subfamily.</text>
</comment>